<sequence length="96" mass="10185">MNIRPLHDRVIVKRLEVESTSAGGIVLTGSAAEKSTRGEILAVGNGRILENGTVKPLDVKVGDVVIFNEGYGVKKEKIDGQEVLILSEADLMAVVG</sequence>
<keyword id="KW-0143">Chaperone</keyword>
<keyword id="KW-0963">Cytoplasm</keyword>
<reference key="1">
    <citation type="submission" date="2006-12" db="EMBL/GenBank/DDBJ databases">
        <title>Complete sequence of Shewanella sp. W3-18-1.</title>
        <authorList>
            <consortium name="US DOE Joint Genome Institute"/>
            <person name="Copeland A."/>
            <person name="Lucas S."/>
            <person name="Lapidus A."/>
            <person name="Barry K."/>
            <person name="Detter J.C."/>
            <person name="Glavina del Rio T."/>
            <person name="Hammon N."/>
            <person name="Israni S."/>
            <person name="Dalin E."/>
            <person name="Tice H."/>
            <person name="Pitluck S."/>
            <person name="Chain P."/>
            <person name="Malfatti S."/>
            <person name="Shin M."/>
            <person name="Vergez L."/>
            <person name="Schmutz J."/>
            <person name="Larimer F."/>
            <person name="Land M."/>
            <person name="Hauser L."/>
            <person name="Kyrpides N."/>
            <person name="Lykidis A."/>
            <person name="Tiedje J."/>
            <person name="Richardson P."/>
        </authorList>
    </citation>
    <scope>NUCLEOTIDE SEQUENCE [LARGE SCALE GENOMIC DNA]</scope>
    <source>
        <strain>W3-18-1</strain>
    </source>
</reference>
<accession>A1RNN7</accession>
<proteinExistence type="inferred from homology"/>
<gene>
    <name evidence="1" type="primary">groES</name>
    <name evidence="1" type="synonym">groS</name>
    <name type="ordered locus">Sputw3181_3470</name>
</gene>
<feature type="chain" id="PRO_1000025368" description="Co-chaperonin GroES">
    <location>
        <begin position="1"/>
        <end position="96"/>
    </location>
</feature>
<evidence type="ECO:0000255" key="1">
    <source>
        <dbReference type="HAMAP-Rule" id="MF_00580"/>
    </source>
</evidence>
<comment type="function">
    <text evidence="1">Together with the chaperonin GroEL, plays an essential role in assisting protein folding. The GroEL-GroES system forms a nano-cage that allows encapsulation of the non-native substrate proteins and provides a physical environment optimized to promote and accelerate protein folding. GroES binds to the apical surface of the GroEL ring, thereby capping the opening of the GroEL channel.</text>
</comment>
<comment type="subunit">
    <text evidence="1">Heptamer of 7 subunits arranged in a ring. Interacts with the chaperonin GroEL.</text>
</comment>
<comment type="subcellular location">
    <subcellularLocation>
        <location evidence="1">Cytoplasm</location>
    </subcellularLocation>
</comment>
<comment type="similarity">
    <text evidence="1">Belongs to the GroES chaperonin family.</text>
</comment>
<dbReference type="EMBL" id="CP000503">
    <property type="protein sequence ID" value="ABM26282.1"/>
    <property type="molecule type" value="Genomic_DNA"/>
</dbReference>
<dbReference type="RefSeq" id="WP_006086113.1">
    <property type="nucleotide sequence ID" value="NC_008750.1"/>
</dbReference>
<dbReference type="SMR" id="A1RNN7"/>
<dbReference type="KEGG" id="shw:Sputw3181_3470"/>
<dbReference type="HOGENOM" id="CLU_132825_1_1_6"/>
<dbReference type="Proteomes" id="UP000002597">
    <property type="component" value="Chromosome"/>
</dbReference>
<dbReference type="GO" id="GO:0005737">
    <property type="term" value="C:cytoplasm"/>
    <property type="evidence" value="ECO:0007669"/>
    <property type="project" value="UniProtKB-SubCell"/>
</dbReference>
<dbReference type="GO" id="GO:0005524">
    <property type="term" value="F:ATP binding"/>
    <property type="evidence" value="ECO:0007669"/>
    <property type="project" value="InterPro"/>
</dbReference>
<dbReference type="GO" id="GO:0046872">
    <property type="term" value="F:metal ion binding"/>
    <property type="evidence" value="ECO:0007669"/>
    <property type="project" value="TreeGrafter"/>
</dbReference>
<dbReference type="GO" id="GO:0044183">
    <property type="term" value="F:protein folding chaperone"/>
    <property type="evidence" value="ECO:0007669"/>
    <property type="project" value="InterPro"/>
</dbReference>
<dbReference type="GO" id="GO:0051087">
    <property type="term" value="F:protein-folding chaperone binding"/>
    <property type="evidence" value="ECO:0007669"/>
    <property type="project" value="TreeGrafter"/>
</dbReference>
<dbReference type="GO" id="GO:0051082">
    <property type="term" value="F:unfolded protein binding"/>
    <property type="evidence" value="ECO:0007669"/>
    <property type="project" value="TreeGrafter"/>
</dbReference>
<dbReference type="GO" id="GO:0051085">
    <property type="term" value="P:chaperone cofactor-dependent protein refolding"/>
    <property type="evidence" value="ECO:0007669"/>
    <property type="project" value="TreeGrafter"/>
</dbReference>
<dbReference type="CDD" id="cd00320">
    <property type="entry name" value="cpn10"/>
    <property type="match status" value="1"/>
</dbReference>
<dbReference type="FunFam" id="2.30.33.40:FF:000001">
    <property type="entry name" value="10 kDa chaperonin"/>
    <property type="match status" value="1"/>
</dbReference>
<dbReference type="Gene3D" id="2.30.33.40">
    <property type="entry name" value="GroES chaperonin"/>
    <property type="match status" value="1"/>
</dbReference>
<dbReference type="HAMAP" id="MF_00580">
    <property type="entry name" value="CH10"/>
    <property type="match status" value="1"/>
</dbReference>
<dbReference type="InterPro" id="IPR020818">
    <property type="entry name" value="Chaperonin_GroES"/>
</dbReference>
<dbReference type="InterPro" id="IPR037124">
    <property type="entry name" value="Chaperonin_GroES_sf"/>
</dbReference>
<dbReference type="InterPro" id="IPR018369">
    <property type="entry name" value="Chaprnonin_Cpn10_CS"/>
</dbReference>
<dbReference type="InterPro" id="IPR011032">
    <property type="entry name" value="GroES-like_sf"/>
</dbReference>
<dbReference type="NCBIfam" id="NF001526">
    <property type="entry name" value="PRK00364.1-1"/>
    <property type="match status" value="1"/>
</dbReference>
<dbReference type="NCBIfam" id="NF001527">
    <property type="entry name" value="PRK00364.1-2"/>
    <property type="match status" value="1"/>
</dbReference>
<dbReference type="NCBIfam" id="NF001531">
    <property type="entry name" value="PRK00364.2-2"/>
    <property type="match status" value="1"/>
</dbReference>
<dbReference type="PANTHER" id="PTHR10772">
    <property type="entry name" value="10 KDA HEAT SHOCK PROTEIN"/>
    <property type="match status" value="1"/>
</dbReference>
<dbReference type="PANTHER" id="PTHR10772:SF58">
    <property type="entry name" value="CO-CHAPERONIN GROES"/>
    <property type="match status" value="1"/>
</dbReference>
<dbReference type="Pfam" id="PF00166">
    <property type="entry name" value="Cpn10"/>
    <property type="match status" value="1"/>
</dbReference>
<dbReference type="PRINTS" id="PR00297">
    <property type="entry name" value="CHAPERONIN10"/>
</dbReference>
<dbReference type="SMART" id="SM00883">
    <property type="entry name" value="Cpn10"/>
    <property type="match status" value="1"/>
</dbReference>
<dbReference type="SUPFAM" id="SSF50129">
    <property type="entry name" value="GroES-like"/>
    <property type="match status" value="1"/>
</dbReference>
<dbReference type="PROSITE" id="PS00681">
    <property type="entry name" value="CHAPERONINS_CPN10"/>
    <property type="match status" value="1"/>
</dbReference>
<name>CH10_SHESW</name>
<protein>
    <recommendedName>
        <fullName evidence="1">Co-chaperonin GroES</fullName>
    </recommendedName>
    <alternativeName>
        <fullName evidence="1">10 kDa chaperonin</fullName>
    </alternativeName>
    <alternativeName>
        <fullName evidence="1">Chaperonin-10</fullName>
        <shortName evidence="1">Cpn10</shortName>
    </alternativeName>
</protein>
<organism>
    <name type="scientific">Shewanella sp. (strain W3-18-1)</name>
    <dbReference type="NCBI Taxonomy" id="351745"/>
    <lineage>
        <taxon>Bacteria</taxon>
        <taxon>Pseudomonadati</taxon>
        <taxon>Pseudomonadota</taxon>
        <taxon>Gammaproteobacteria</taxon>
        <taxon>Alteromonadales</taxon>
        <taxon>Shewanellaceae</taxon>
        <taxon>Shewanella</taxon>
    </lineage>
</organism>